<comment type="function">
    <text evidence="1">NDH shuttles electrons from NAD(P)H:plastoquinone, via FMN and iron-sulfur (Fe-S) centers, to quinones in the photosynthetic chain and possibly in a chloroplast respiratory chain. The immediate electron acceptor for the enzyme in this species is believed to be plastoquinone. Couples the redox reaction to proton translocation, and thus conserves the redox energy in a proton gradient.</text>
</comment>
<comment type="catalytic activity">
    <reaction evidence="1">
        <text>a plastoquinone + NADH + (n+1) H(+)(in) = a plastoquinol + NAD(+) + n H(+)(out)</text>
        <dbReference type="Rhea" id="RHEA:42608"/>
        <dbReference type="Rhea" id="RHEA-COMP:9561"/>
        <dbReference type="Rhea" id="RHEA-COMP:9562"/>
        <dbReference type="ChEBI" id="CHEBI:15378"/>
        <dbReference type="ChEBI" id="CHEBI:17757"/>
        <dbReference type="ChEBI" id="CHEBI:57540"/>
        <dbReference type="ChEBI" id="CHEBI:57945"/>
        <dbReference type="ChEBI" id="CHEBI:62192"/>
    </reaction>
</comment>
<comment type="catalytic activity">
    <reaction evidence="1">
        <text>a plastoquinone + NADPH + (n+1) H(+)(in) = a plastoquinol + NADP(+) + n H(+)(out)</text>
        <dbReference type="Rhea" id="RHEA:42612"/>
        <dbReference type="Rhea" id="RHEA-COMP:9561"/>
        <dbReference type="Rhea" id="RHEA-COMP:9562"/>
        <dbReference type="ChEBI" id="CHEBI:15378"/>
        <dbReference type="ChEBI" id="CHEBI:17757"/>
        <dbReference type="ChEBI" id="CHEBI:57783"/>
        <dbReference type="ChEBI" id="CHEBI:58349"/>
        <dbReference type="ChEBI" id="CHEBI:62192"/>
    </reaction>
</comment>
<comment type="subunit">
    <text evidence="1">NDH is composed of at least 16 different subunits, 5 of which are encoded in the nucleus.</text>
</comment>
<comment type="subcellular location">
    <subcellularLocation>
        <location evidence="1">Plastid</location>
        <location evidence="1">Chloroplast thylakoid membrane</location>
        <topology evidence="1">Peripheral membrane protein</topology>
        <orientation evidence="1">Stromal side</orientation>
    </subcellularLocation>
</comment>
<comment type="similarity">
    <text evidence="1">Belongs to the complex I 49 kDa subunit family.</text>
</comment>
<organism>
    <name type="scientific">Trifolium subterraneum</name>
    <name type="common">Subterranean clover</name>
    <dbReference type="NCBI Taxonomy" id="3900"/>
    <lineage>
        <taxon>Eukaryota</taxon>
        <taxon>Viridiplantae</taxon>
        <taxon>Streptophyta</taxon>
        <taxon>Embryophyta</taxon>
        <taxon>Tracheophyta</taxon>
        <taxon>Spermatophyta</taxon>
        <taxon>Magnoliopsida</taxon>
        <taxon>eudicotyledons</taxon>
        <taxon>Gunneridae</taxon>
        <taxon>Pentapetalae</taxon>
        <taxon>rosids</taxon>
        <taxon>fabids</taxon>
        <taxon>Fabales</taxon>
        <taxon>Fabaceae</taxon>
        <taxon>Papilionoideae</taxon>
        <taxon>50 kb inversion clade</taxon>
        <taxon>NPAAA clade</taxon>
        <taxon>Hologalegina</taxon>
        <taxon>IRL clade</taxon>
        <taxon>Trifolieae</taxon>
        <taxon>Trifolium</taxon>
    </lineage>
</organism>
<protein>
    <recommendedName>
        <fullName evidence="1">NAD(P)H-quinone oxidoreductase subunit H, chloroplastic</fullName>
        <ecNumber evidence="1">7.1.1.-</ecNumber>
    </recommendedName>
    <alternativeName>
        <fullName>NAD(P)H dehydrogenase subunit H</fullName>
    </alternativeName>
    <alternativeName>
        <fullName evidence="1">NADH-plastoquinone oxidoreductase 49 kDa subunit</fullName>
    </alternativeName>
    <alternativeName>
        <fullName evidence="1">NADH-plastoquinone oxidoreductase subunit H</fullName>
    </alternativeName>
</protein>
<reference key="1">
    <citation type="journal article" date="2008" name="J. Mol. Evol.">
        <title>Extensive reorganization of the plastid genome of Trifolium subterraneum (Fabaceae) is associated with numerous repeated sequences and novel DNA insertions.</title>
        <authorList>
            <person name="Cai Z."/>
            <person name="Guisinger M."/>
            <person name="Kim H.-G."/>
            <person name="Ruck E."/>
            <person name="Blazier J.C."/>
            <person name="McMurtry V."/>
            <person name="Kuehl J.V."/>
            <person name="Boore J."/>
            <person name="Jansen R.K."/>
        </authorList>
    </citation>
    <scope>NUCLEOTIDE SEQUENCE [LARGE SCALE GENOMIC DNA]</scope>
</reference>
<accession>B8R4B1</accession>
<keyword id="KW-0150">Chloroplast</keyword>
<keyword id="KW-0472">Membrane</keyword>
<keyword id="KW-0520">NAD</keyword>
<keyword id="KW-0521">NADP</keyword>
<keyword id="KW-0934">Plastid</keyword>
<keyword id="KW-0618">Plastoquinone</keyword>
<keyword id="KW-0874">Quinone</keyword>
<keyword id="KW-0793">Thylakoid</keyword>
<keyword id="KW-1278">Translocase</keyword>
<keyword id="KW-0813">Transport</keyword>
<gene>
    <name evidence="1" type="primary">ndhH</name>
</gene>
<name>NDHH_TRISU</name>
<proteinExistence type="inferred from homology"/>
<geneLocation type="chloroplast"/>
<sequence>MNVPARIKDLMIVNMGPQHPSMHGVLRLIVTLDGEDVVDCEPILGYLHRGMEKIAENRTIIQYLPYVTRWDYLATMFTEAITVNGPEQLGNIQVPKRASYIRVIMLELSRIASHLLWLGPFMADIGAQTPFFYIFRERELIYDLFEAATGMRMMHNYFRIGGVAADLPYGWIDKCFDFCNYFLTRVIEYQKLITRNPIFLERVEGVGVVGREEVLTWGLSGPMLRASGIQWDLRKVDNYECYDEFDWEVQWQKEGDSLARYLVRIGEMMESIKIIQQALEGIPGGPYENLEIRSFDREKEPEWNDFEYRFIGKKSSPTFELPKQELYVRVEAPKGELGIFLIGDHNGFPWRWKIRPPGFINLQILPQLVKRMKLADIMTILGSIDIIMGEVDR</sequence>
<evidence type="ECO:0000255" key="1">
    <source>
        <dbReference type="HAMAP-Rule" id="MF_01358"/>
    </source>
</evidence>
<dbReference type="EC" id="7.1.1.-" evidence="1"/>
<dbReference type="EMBL" id="EU849487">
    <property type="protein sequence ID" value="ACF20563.1"/>
    <property type="molecule type" value="Genomic_DNA"/>
</dbReference>
<dbReference type="RefSeq" id="YP_002456482.1">
    <property type="nucleotide sequence ID" value="NC_011828.1"/>
</dbReference>
<dbReference type="SMR" id="B8R4B1"/>
<dbReference type="GeneID" id="7256626"/>
<dbReference type="GO" id="GO:0009535">
    <property type="term" value="C:chloroplast thylakoid membrane"/>
    <property type="evidence" value="ECO:0007669"/>
    <property type="project" value="UniProtKB-SubCell"/>
</dbReference>
<dbReference type="GO" id="GO:0051287">
    <property type="term" value="F:NAD binding"/>
    <property type="evidence" value="ECO:0007669"/>
    <property type="project" value="InterPro"/>
</dbReference>
<dbReference type="GO" id="GO:0016655">
    <property type="term" value="F:oxidoreductase activity, acting on NAD(P)H, quinone or similar compound as acceptor"/>
    <property type="evidence" value="ECO:0007669"/>
    <property type="project" value="UniProtKB-UniRule"/>
</dbReference>
<dbReference type="GO" id="GO:0048038">
    <property type="term" value="F:quinone binding"/>
    <property type="evidence" value="ECO:0007669"/>
    <property type="project" value="UniProtKB-KW"/>
</dbReference>
<dbReference type="GO" id="GO:0019684">
    <property type="term" value="P:photosynthesis, light reaction"/>
    <property type="evidence" value="ECO:0007669"/>
    <property type="project" value="UniProtKB-UniRule"/>
</dbReference>
<dbReference type="FunFam" id="1.10.645.10:FF:000003">
    <property type="entry name" value="NAD(P)H-quinone oxidoreductase subunit H, chloroplastic"/>
    <property type="match status" value="1"/>
</dbReference>
<dbReference type="Gene3D" id="1.10.645.10">
    <property type="entry name" value="Cytochrome-c3 Hydrogenase, chain B"/>
    <property type="match status" value="1"/>
</dbReference>
<dbReference type="HAMAP" id="MF_01358">
    <property type="entry name" value="NDH1_NuoD"/>
    <property type="match status" value="1"/>
</dbReference>
<dbReference type="InterPro" id="IPR001135">
    <property type="entry name" value="NADH_Q_OxRdtase_suD"/>
</dbReference>
<dbReference type="InterPro" id="IPR014029">
    <property type="entry name" value="NADH_UbQ_OxRdtase_49kDa_CS"/>
</dbReference>
<dbReference type="InterPro" id="IPR022885">
    <property type="entry name" value="NDH1_su_D/H"/>
</dbReference>
<dbReference type="InterPro" id="IPR029014">
    <property type="entry name" value="NiFe-Hase_large"/>
</dbReference>
<dbReference type="NCBIfam" id="NF004739">
    <property type="entry name" value="PRK06075.1"/>
    <property type="match status" value="1"/>
</dbReference>
<dbReference type="NCBIfam" id="NF005649">
    <property type="entry name" value="PRK07415.1"/>
    <property type="match status" value="1"/>
</dbReference>
<dbReference type="PANTHER" id="PTHR11993:SF10">
    <property type="entry name" value="NADH DEHYDROGENASE [UBIQUINONE] IRON-SULFUR PROTEIN 2, MITOCHONDRIAL"/>
    <property type="match status" value="1"/>
</dbReference>
<dbReference type="PANTHER" id="PTHR11993">
    <property type="entry name" value="NADH-UBIQUINONE OXIDOREDUCTASE 49 KDA SUBUNIT"/>
    <property type="match status" value="1"/>
</dbReference>
<dbReference type="Pfam" id="PF00346">
    <property type="entry name" value="Complex1_49kDa"/>
    <property type="match status" value="1"/>
</dbReference>
<dbReference type="SUPFAM" id="SSF56762">
    <property type="entry name" value="HydB/Nqo4-like"/>
    <property type="match status" value="1"/>
</dbReference>
<dbReference type="PROSITE" id="PS00535">
    <property type="entry name" value="COMPLEX1_49K"/>
    <property type="match status" value="1"/>
</dbReference>
<feature type="chain" id="PRO_0000371958" description="NAD(P)H-quinone oxidoreductase subunit H, chloroplastic">
    <location>
        <begin position="1"/>
        <end position="393"/>
    </location>
</feature>